<organism>
    <name type="scientific">Cupriavidus pinatubonensis (strain JMP 134 / LMG 1197)</name>
    <name type="common">Cupriavidus necator (strain JMP 134)</name>
    <dbReference type="NCBI Taxonomy" id="264198"/>
    <lineage>
        <taxon>Bacteria</taxon>
        <taxon>Pseudomonadati</taxon>
        <taxon>Pseudomonadota</taxon>
        <taxon>Betaproteobacteria</taxon>
        <taxon>Burkholderiales</taxon>
        <taxon>Burkholderiaceae</taxon>
        <taxon>Cupriavidus</taxon>
    </lineage>
</organism>
<gene>
    <name evidence="1" type="primary">pyrB</name>
    <name type="ordered locus">Reut_A0708</name>
</gene>
<evidence type="ECO:0000255" key="1">
    <source>
        <dbReference type="HAMAP-Rule" id="MF_00001"/>
    </source>
</evidence>
<accession>Q474U3</accession>
<keyword id="KW-0665">Pyrimidine biosynthesis</keyword>
<keyword id="KW-0808">Transferase</keyword>
<name>PYRB_CUPPJ</name>
<reference key="1">
    <citation type="journal article" date="2010" name="PLoS ONE">
        <title>The complete multipartite genome sequence of Cupriavidus necator JMP134, a versatile pollutant degrader.</title>
        <authorList>
            <person name="Lykidis A."/>
            <person name="Perez-Pantoja D."/>
            <person name="Ledger T."/>
            <person name="Mavromatis K."/>
            <person name="Anderson I.J."/>
            <person name="Ivanova N.N."/>
            <person name="Hooper S.D."/>
            <person name="Lapidus A."/>
            <person name="Lucas S."/>
            <person name="Gonzalez B."/>
            <person name="Kyrpides N.C."/>
        </authorList>
    </citation>
    <scope>NUCLEOTIDE SEQUENCE [LARGE SCALE GENOMIC DNA]</scope>
    <source>
        <strain>JMP134 / LMG 1197</strain>
    </source>
</reference>
<sequence length="323" mass="35247">MTKTFRNPQLTKNGELKHLLSIEGLSRDMITHILDTASQFVSLSDSDRDVKKVPLLRGKSVFNLFFENSTRTRTTFEIAAKRLSADVLNLNINASSTSKGESLLDTINNLSAMSADMFVVRHASSGAPYLIAEHVAPHVHVINAGDGRHAHPTQGLLDMYTIRHFKKDFTQLRVAIVGDILHSRVARSDIHALTTLGVPEVRAIGPRTLLPSGLEQMGVRVFHNMEEGLKDVDVVIMLRLQNERMSGALLPSAQEYFKAFGLTPERLALAAPDAIVMHPGPMNRGVEIDSAVADGPQSVILNQVTFGIAVRMAVMGIVAGNSD</sequence>
<dbReference type="EC" id="2.1.3.2" evidence="1"/>
<dbReference type="EMBL" id="CP000090">
    <property type="protein sequence ID" value="AAZ60090.1"/>
    <property type="molecule type" value="Genomic_DNA"/>
</dbReference>
<dbReference type="SMR" id="Q474U3"/>
<dbReference type="STRING" id="264198.Reut_A0708"/>
<dbReference type="KEGG" id="reu:Reut_A0708"/>
<dbReference type="eggNOG" id="COG0540">
    <property type="taxonomic scope" value="Bacteria"/>
</dbReference>
<dbReference type="HOGENOM" id="CLU_043846_2_0_4"/>
<dbReference type="OrthoDB" id="9774690at2"/>
<dbReference type="UniPathway" id="UPA00070">
    <property type="reaction ID" value="UER00116"/>
</dbReference>
<dbReference type="GO" id="GO:0005829">
    <property type="term" value="C:cytosol"/>
    <property type="evidence" value="ECO:0007669"/>
    <property type="project" value="TreeGrafter"/>
</dbReference>
<dbReference type="GO" id="GO:0016597">
    <property type="term" value="F:amino acid binding"/>
    <property type="evidence" value="ECO:0007669"/>
    <property type="project" value="InterPro"/>
</dbReference>
<dbReference type="GO" id="GO:0004070">
    <property type="term" value="F:aspartate carbamoyltransferase activity"/>
    <property type="evidence" value="ECO:0007669"/>
    <property type="project" value="UniProtKB-UniRule"/>
</dbReference>
<dbReference type="GO" id="GO:0006207">
    <property type="term" value="P:'de novo' pyrimidine nucleobase biosynthetic process"/>
    <property type="evidence" value="ECO:0007669"/>
    <property type="project" value="InterPro"/>
</dbReference>
<dbReference type="GO" id="GO:0044205">
    <property type="term" value="P:'de novo' UMP biosynthetic process"/>
    <property type="evidence" value="ECO:0007669"/>
    <property type="project" value="UniProtKB-UniRule"/>
</dbReference>
<dbReference type="GO" id="GO:0006520">
    <property type="term" value="P:amino acid metabolic process"/>
    <property type="evidence" value="ECO:0007669"/>
    <property type="project" value="InterPro"/>
</dbReference>
<dbReference type="FunFam" id="3.40.50.1370:FF:000007">
    <property type="entry name" value="Aspartate carbamoyltransferase"/>
    <property type="match status" value="1"/>
</dbReference>
<dbReference type="Gene3D" id="3.40.50.1370">
    <property type="entry name" value="Aspartate/ornithine carbamoyltransferase"/>
    <property type="match status" value="2"/>
</dbReference>
<dbReference type="HAMAP" id="MF_00001">
    <property type="entry name" value="Asp_carb_tr"/>
    <property type="match status" value="1"/>
</dbReference>
<dbReference type="InterPro" id="IPR006132">
    <property type="entry name" value="Asp/Orn_carbamoyltranf_P-bd"/>
</dbReference>
<dbReference type="InterPro" id="IPR006130">
    <property type="entry name" value="Asp/Orn_carbamoylTrfase"/>
</dbReference>
<dbReference type="InterPro" id="IPR036901">
    <property type="entry name" value="Asp/Orn_carbamoylTrfase_sf"/>
</dbReference>
<dbReference type="InterPro" id="IPR002082">
    <property type="entry name" value="Asp_carbamoyltransf"/>
</dbReference>
<dbReference type="InterPro" id="IPR006131">
    <property type="entry name" value="Asp_carbamoyltransf_Asp/Orn-bd"/>
</dbReference>
<dbReference type="NCBIfam" id="TIGR00670">
    <property type="entry name" value="asp_carb_tr"/>
    <property type="match status" value="1"/>
</dbReference>
<dbReference type="NCBIfam" id="NF002032">
    <property type="entry name" value="PRK00856.1"/>
    <property type="match status" value="1"/>
</dbReference>
<dbReference type="PANTHER" id="PTHR45753:SF6">
    <property type="entry name" value="ASPARTATE CARBAMOYLTRANSFERASE"/>
    <property type="match status" value="1"/>
</dbReference>
<dbReference type="PANTHER" id="PTHR45753">
    <property type="entry name" value="ORNITHINE CARBAMOYLTRANSFERASE, MITOCHONDRIAL"/>
    <property type="match status" value="1"/>
</dbReference>
<dbReference type="Pfam" id="PF00185">
    <property type="entry name" value="OTCace"/>
    <property type="match status" value="1"/>
</dbReference>
<dbReference type="Pfam" id="PF02729">
    <property type="entry name" value="OTCace_N"/>
    <property type="match status" value="1"/>
</dbReference>
<dbReference type="PRINTS" id="PR00100">
    <property type="entry name" value="AOTCASE"/>
</dbReference>
<dbReference type="PRINTS" id="PR00101">
    <property type="entry name" value="ATCASE"/>
</dbReference>
<dbReference type="SUPFAM" id="SSF53671">
    <property type="entry name" value="Aspartate/ornithine carbamoyltransferase"/>
    <property type="match status" value="1"/>
</dbReference>
<dbReference type="PROSITE" id="PS00097">
    <property type="entry name" value="CARBAMOYLTRANSFERASE"/>
    <property type="match status" value="1"/>
</dbReference>
<comment type="function">
    <text evidence="1">Catalyzes the condensation of carbamoyl phosphate and aspartate to form carbamoyl aspartate and inorganic phosphate, the committed step in the de novo pyrimidine nucleotide biosynthesis pathway.</text>
</comment>
<comment type="catalytic activity">
    <reaction evidence="1">
        <text>carbamoyl phosphate + L-aspartate = N-carbamoyl-L-aspartate + phosphate + H(+)</text>
        <dbReference type="Rhea" id="RHEA:20013"/>
        <dbReference type="ChEBI" id="CHEBI:15378"/>
        <dbReference type="ChEBI" id="CHEBI:29991"/>
        <dbReference type="ChEBI" id="CHEBI:32814"/>
        <dbReference type="ChEBI" id="CHEBI:43474"/>
        <dbReference type="ChEBI" id="CHEBI:58228"/>
        <dbReference type="EC" id="2.1.3.2"/>
    </reaction>
</comment>
<comment type="pathway">
    <text evidence="1">Pyrimidine metabolism; UMP biosynthesis via de novo pathway; (S)-dihydroorotate from bicarbonate: step 2/3.</text>
</comment>
<comment type="subunit">
    <text evidence="1">Heterododecamer (2C3:3R2) of six catalytic PyrB chains organized as two trimers (C3), and six regulatory PyrI chains organized as three dimers (R2).</text>
</comment>
<comment type="similarity">
    <text evidence="1">Belongs to the aspartate/ornithine carbamoyltransferase superfamily. ATCase family.</text>
</comment>
<protein>
    <recommendedName>
        <fullName evidence="1">Aspartate carbamoyltransferase catalytic subunit</fullName>
        <ecNumber evidence="1">2.1.3.2</ecNumber>
    </recommendedName>
    <alternativeName>
        <fullName evidence="1">Aspartate transcarbamylase</fullName>
        <shortName evidence="1">ATCase</shortName>
    </alternativeName>
</protein>
<feature type="chain" id="PRO_0000321146" description="Aspartate carbamoyltransferase catalytic subunit">
    <location>
        <begin position="1"/>
        <end position="323"/>
    </location>
</feature>
<feature type="binding site" evidence="1">
    <location>
        <position position="71"/>
    </location>
    <ligand>
        <name>carbamoyl phosphate</name>
        <dbReference type="ChEBI" id="CHEBI:58228"/>
    </ligand>
</feature>
<feature type="binding site" evidence="1">
    <location>
        <position position="72"/>
    </location>
    <ligand>
        <name>carbamoyl phosphate</name>
        <dbReference type="ChEBI" id="CHEBI:58228"/>
    </ligand>
</feature>
<feature type="binding site" evidence="1">
    <location>
        <position position="99"/>
    </location>
    <ligand>
        <name>L-aspartate</name>
        <dbReference type="ChEBI" id="CHEBI:29991"/>
    </ligand>
</feature>
<feature type="binding site" evidence="1">
    <location>
        <position position="121"/>
    </location>
    <ligand>
        <name>carbamoyl phosphate</name>
        <dbReference type="ChEBI" id="CHEBI:58228"/>
    </ligand>
</feature>
<feature type="binding site" evidence="1">
    <location>
        <position position="151"/>
    </location>
    <ligand>
        <name>carbamoyl phosphate</name>
        <dbReference type="ChEBI" id="CHEBI:58228"/>
    </ligand>
</feature>
<feature type="binding site" evidence="1">
    <location>
        <position position="154"/>
    </location>
    <ligand>
        <name>carbamoyl phosphate</name>
        <dbReference type="ChEBI" id="CHEBI:58228"/>
    </ligand>
</feature>
<feature type="binding site" evidence="1">
    <location>
        <position position="184"/>
    </location>
    <ligand>
        <name>L-aspartate</name>
        <dbReference type="ChEBI" id="CHEBI:29991"/>
    </ligand>
</feature>
<feature type="binding site" evidence="1">
    <location>
        <position position="239"/>
    </location>
    <ligand>
        <name>L-aspartate</name>
        <dbReference type="ChEBI" id="CHEBI:29991"/>
    </ligand>
</feature>
<feature type="binding site" evidence="1">
    <location>
        <position position="280"/>
    </location>
    <ligand>
        <name>carbamoyl phosphate</name>
        <dbReference type="ChEBI" id="CHEBI:58228"/>
    </ligand>
</feature>
<feature type="binding site" evidence="1">
    <location>
        <position position="281"/>
    </location>
    <ligand>
        <name>carbamoyl phosphate</name>
        <dbReference type="ChEBI" id="CHEBI:58228"/>
    </ligand>
</feature>
<proteinExistence type="inferred from homology"/>